<dbReference type="EC" id="3.6.4.-" evidence="1"/>
<dbReference type="EMBL" id="ADOT01000092">
    <property type="protein sequence ID" value="EGX51035.1"/>
    <property type="molecule type" value="Genomic_DNA"/>
</dbReference>
<dbReference type="RefSeq" id="XP_011120389.1">
    <property type="nucleotide sequence ID" value="XM_011122087.1"/>
</dbReference>
<dbReference type="SMR" id="G1X7C7"/>
<dbReference type="FunCoup" id="G1X7C7">
    <property type="interactions" value="191"/>
</dbReference>
<dbReference type="STRING" id="756982.G1X7C7"/>
<dbReference type="GeneID" id="22891350"/>
<dbReference type="eggNOG" id="KOG0735">
    <property type="taxonomic scope" value="Eukaryota"/>
</dbReference>
<dbReference type="HOGENOM" id="CLU_000688_1_0_1"/>
<dbReference type="InParanoid" id="G1X7C7"/>
<dbReference type="OMA" id="LSASWCA"/>
<dbReference type="OrthoDB" id="1931366at4890"/>
<dbReference type="Proteomes" id="UP000008784">
    <property type="component" value="Unassembled WGS sequence"/>
</dbReference>
<dbReference type="GO" id="GO:0005829">
    <property type="term" value="C:cytosol"/>
    <property type="evidence" value="ECO:0007669"/>
    <property type="project" value="UniProtKB-SubCell"/>
</dbReference>
<dbReference type="GO" id="GO:0005778">
    <property type="term" value="C:peroxisomal membrane"/>
    <property type="evidence" value="ECO:0007669"/>
    <property type="project" value="UniProtKB-SubCell"/>
</dbReference>
<dbReference type="GO" id="GO:0005524">
    <property type="term" value="F:ATP binding"/>
    <property type="evidence" value="ECO:0007669"/>
    <property type="project" value="UniProtKB-KW"/>
</dbReference>
<dbReference type="GO" id="GO:0016887">
    <property type="term" value="F:ATP hydrolysis activity"/>
    <property type="evidence" value="ECO:0007669"/>
    <property type="project" value="InterPro"/>
</dbReference>
<dbReference type="GO" id="GO:0016558">
    <property type="term" value="P:protein import into peroxisome matrix"/>
    <property type="evidence" value="ECO:0007669"/>
    <property type="project" value="TreeGrafter"/>
</dbReference>
<dbReference type="CDD" id="cd19526">
    <property type="entry name" value="RecA-like_PEX1_r2"/>
    <property type="match status" value="1"/>
</dbReference>
<dbReference type="FunFam" id="3.40.50.300:FF:000149">
    <property type="entry name" value="Nuclear valosin-containing protein-like"/>
    <property type="match status" value="1"/>
</dbReference>
<dbReference type="FunFam" id="1.10.8.60:FF:000105">
    <property type="entry name" value="PeRoXisome assembly factor"/>
    <property type="match status" value="1"/>
</dbReference>
<dbReference type="Gene3D" id="1.10.8.60">
    <property type="match status" value="2"/>
</dbReference>
<dbReference type="Gene3D" id="3.10.330.10">
    <property type="match status" value="1"/>
</dbReference>
<dbReference type="Gene3D" id="3.40.50.300">
    <property type="entry name" value="P-loop containing nucleotide triphosphate hydrolases"/>
    <property type="match status" value="2"/>
</dbReference>
<dbReference type="InterPro" id="IPR003593">
    <property type="entry name" value="AAA+_ATPase"/>
</dbReference>
<dbReference type="InterPro" id="IPR050168">
    <property type="entry name" value="AAA_ATPase_domain"/>
</dbReference>
<dbReference type="InterPro" id="IPR041569">
    <property type="entry name" value="AAA_lid_3"/>
</dbReference>
<dbReference type="InterPro" id="IPR009010">
    <property type="entry name" value="Asp_de-COase-like_dom_sf"/>
</dbReference>
<dbReference type="InterPro" id="IPR003959">
    <property type="entry name" value="ATPase_AAA_core"/>
</dbReference>
<dbReference type="InterPro" id="IPR003960">
    <property type="entry name" value="ATPase_AAA_CS"/>
</dbReference>
<dbReference type="InterPro" id="IPR029067">
    <property type="entry name" value="CDC48_domain_2-like_sf"/>
</dbReference>
<dbReference type="InterPro" id="IPR027417">
    <property type="entry name" value="P-loop_NTPase"/>
</dbReference>
<dbReference type="InterPro" id="IPR015342">
    <property type="entry name" value="PEX1-N_C-lobe"/>
</dbReference>
<dbReference type="PANTHER" id="PTHR23077">
    <property type="entry name" value="AAA-FAMILY ATPASE"/>
    <property type="match status" value="1"/>
</dbReference>
<dbReference type="PANTHER" id="PTHR23077:SF12">
    <property type="entry name" value="PEROXISOMAL ATPASE PEX1"/>
    <property type="match status" value="1"/>
</dbReference>
<dbReference type="Pfam" id="PF00004">
    <property type="entry name" value="AAA"/>
    <property type="match status" value="2"/>
</dbReference>
<dbReference type="Pfam" id="PF17862">
    <property type="entry name" value="AAA_lid_3"/>
    <property type="match status" value="1"/>
</dbReference>
<dbReference type="Pfam" id="PF09262">
    <property type="entry name" value="PEX-1N"/>
    <property type="match status" value="1"/>
</dbReference>
<dbReference type="SMART" id="SM00382">
    <property type="entry name" value="AAA"/>
    <property type="match status" value="2"/>
</dbReference>
<dbReference type="SUPFAM" id="SSF50692">
    <property type="entry name" value="ADC-like"/>
    <property type="match status" value="1"/>
</dbReference>
<dbReference type="SUPFAM" id="SSF54585">
    <property type="entry name" value="Cdc48 domain 2-like"/>
    <property type="match status" value="1"/>
</dbReference>
<dbReference type="SUPFAM" id="SSF52540">
    <property type="entry name" value="P-loop containing nucleoside triphosphate hydrolases"/>
    <property type="match status" value="2"/>
</dbReference>
<dbReference type="PROSITE" id="PS00674">
    <property type="entry name" value="AAA"/>
    <property type="match status" value="1"/>
</dbReference>
<sequence length="1194" mass="127861">MASSQRRGPTTKTPAVVGLTALRNCLVNLPSGLVSVLVSSNTPAQNVVVELSWRVKAPPQAGPLTGPATITRQAFAGWTGMPSKRQPLQPQGAGSFPGSQRSNSLEGCVEIDSAFARNVGLTEGSKVNILLHVDPPTTHTIHIEPLTASDWEIIELHATFLELNLLSQIRAITFAHPLTVYLSPTSTASIKVARIEPEDAASAFGFAKIAPNAEVIVAPKTRQRRMSHQGKSVKAKSLASTRHGKRRDDGSGPSGGGPVFFRAISLPHESFDAAEEQKGAYCVYLDPEVLAIPALRGCAFVGVVVVRPPGLAPPPDANQANNDVGGSTSPDAPEVIKPSLKIVAKLLPWKNAPDLKHIAISNLLADALDIKNVVGCVIRIEAAHQQLPKGSTTKVIIRPYSAGTLSSSAASEQSSLRWSGKDWKSDLAVRRVKEVLSQKTVWGEDILGGPLSDRLVLPAIPDSPLFAGGILLLDGSEVKHGWILGGDRKYILELGSEITTSRPHVPLSISETALPVLPPGRIVGVDKAINTASNILTRSASVLLTGARGSGKTSLVSVITSILKKKHFFHVLPISCAKFADERLQTIKDTFSRAIAEAKWFSPTVIVFDDLDRLIPAEVEHADSTRSRYIAEAFGKAIRDLKSSVLGPGNVVILATVQAKESVNSLIVGGHIFREIITLKAPNKAGRRQVLEQAVGGLSDEKSSPDTSSIRVKNPAALTNGPEPTLKIEKGLELLDIAGMTDGYMPADLQLLVGRARHEAIVRAVESGSDDAEADLVLGKKDFDKAIKGFVPAGLRGVKLQTSGAAWKDIGGLTETRKILLETLEWPTRYAPIFANCPLRLRSGLLLYGYPGCGKTLLASAVAGECGLNFISVKGPEILNKYIGASEKSVRDLFERASAAKPCVLFFDEFDSIAPKRGHDSTGVTDRVVNQMLTQMDGAEGLDGVYVLAATSRPDLIDPALLRPGRLDKSLLCDLPNLEDRVDILRALSLKLKIEESIGLEDIANLTEGYSGADLQAVLYNAHLEAIHDVIASQDEEVERFGNGGKGKGKVDAGSGNDSIDYISFSMGNKDSTGEPSTQPLTNGTQAARTKFAERAAVMAKLDKLKKIVQGDAAKQVQQQQSQTNQAQEEEKGDDEPVINWKHLQSSLKSTRPSIAPDERKRLFRIYNEFIVGRSGEMPSGQSSTEIGGRSSLM</sequence>
<accession>G1X7C7</accession>
<evidence type="ECO:0000250" key="1">
    <source>
        <dbReference type="UniProtKB" id="P24004"/>
    </source>
</evidence>
<evidence type="ECO:0000255" key="2"/>
<evidence type="ECO:0000256" key="3">
    <source>
        <dbReference type="SAM" id="MobiDB-lite"/>
    </source>
</evidence>
<evidence type="ECO:0000269" key="4">
    <source>
    </source>
</evidence>
<evidence type="ECO:0000303" key="5">
    <source>
    </source>
</evidence>
<evidence type="ECO:0000305" key="6"/>
<organism>
    <name type="scientific">Arthrobotrys oligospora (strain ATCC 24927 / CBS 115.81 / DSM 1491)</name>
    <name type="common">Nematode-trapping fungus</name>
    <name type="synonym">Didymozoophaga oligospora</name>
    <dbReference type="NCBI Taxonomy" id="756982"/>
    <lineage>
        <taxon>Eukaryota</taxon>
        <taxon>Fungi</taxon>
        <taxon>Dikarya</taxon>
        <taxon>Ascomycota</taxon>
        <taxon>Pezizomycotina</taxon>
        <taxon>Orbiliomycetes</taxon>
        <taxon>Orbiliales</taxon>
        <taxon>Orbiliaceae</taxon>
        <taxon>Orbilia</taxon>
        <taxon>Orbilia oligospora</taxon>
    </lineage>
</organism>
<keyword id="KW-0067">ATP-binding</keyword>
<keyword id="KW-0963">Cytoplasm</keyword>
<keyword id="KW-0378">Hydrolase</keyword>
<keyword id="KW-0472">Membrane</keyword>
<keyword id="KW-0547">Nucleotide-binding</keyword>
<keyword id="KW-0576">Peroxisome</keyword>
<keyword id="KW-0962">Peroxisome biogenesis</keyword>
<keyword id="KW-0653">Protein transport</keyword>
<keyword id="KW-1185">Reference proteome</keyword>
<keyword id="KW-0677">Repeat</keyword>
<keyword id="KW-0813">Transport</keyword>
<keyword id="KW-0843">Virulence</keyword>
<gene>
    <name evidence="5" type="primary">PEX1</name>
    <name type="ORF">AOL_s00054g771</name>
</gene>
<proteinExistence type="inferred from homology"/>
<reference key="1">
    <citation type="journal article" date="2011" name="PLoS Pathog.">
        <title>Genomic and proteomic analyses of the fungus Arthrobotrys oligospora provide insights into nematode-trap formation.</title>
        <authorList>
            <person name="Yang J."/>
            <person name="Wang L."/>
            <person name="Ji X."/>
            <person name="Feng Y."/>
            <person name="Li X."/>
            <person name="Zou C."/>
            <person name="Xu J."/>
            <person name="Ren Y."/>
            <person name="Mi Q."/>
            <person name="Wu J."/>
            <person name="Liu S."/>
            <person name="Liu Y."/>
            <person name="Huang X."/>
            <person name="Wang H."/>
            <person name="Niu X."/>
            <person name="Li J."/>
            <person name="Liang L."/>
            <person name="Luo Y."/>
            <person name="Ji K."/>
            <person name="Zhou W."/>
            <person name="Yu Z."/>
            <person name="Li G."/>
            <person name="Liu Y."/>
            <person name="Li L."/>
            <person name="Qiao M."/>
            <person name="Feng L."/>
            <person name="Zhang K.-Q."/>
        </authorList>
    </citation>
    <scope>NUCLEOTIDE SEQUENCE [LARGE SCALE GENOMIC DNA]</scope>
    <source>
        <strain>ATCC 24927 / CBS 115.81 / DSM 1491</strain>
    </source>
</reference>
<reference key="2">
    <citation type="journal article" date="2022" name="Microbiol. Spectr.">
        <title>AoPEX1 and AoPEX6 are required for mycelial growth, conidiation, stress Response, fatty acid utilization, and trap formation in Arthrobotrys oligospora.</title>
        <authorList>
            <person name="Liu Q."/>
            <person name="Li D."/>
            <person name="Jiang K."/>
            <person name="Zhang K.Q."/>
            <person name="Yang J."/>
        </authorList>
    </citation>
    <scope>FUNCTION</scope>
    <scope>DISRUPTION PHENOTYPE</scope>
</reference>
<name>PEX1_ARTOA</name>
<comment type="function">
    <text evidence="1 4">Component of the PEX1-PEX6 AAA ATPase complex, a protein dislocase complex that mediates the ATP-dependent extraction of the PEX5 receptor from peroxisomal membranes, an essential step for PEX5 recycling. Specifically recognizes PEX5 monoubiquitinated at 'Cys-6', and pulls it out of the peroxisome lumen through the PEX2-PEX10-PEX12 retrotranslocation channel. Extraction by the PEX1-PEX6 AAA ATPase complex is accompanied by unfolding of the TPR repeats and release of bound cargo from PEX5 (By similarity). Regulates autophagy and biogenesis of peroxisomes and Woronin bodies (PubMed:35323036). Plays important roles in mycelial growth and development and stress response (PubMed:35323036). Is also essential for conidiation and fatty acid utilization (PubMed:35323036). Required for nematode predation via trap formation (PubMed:35323036).</text>
</comment>
<comment type="catalytic activity">
    <reaction evidence="1">
        <text>ATP + H2O = ADP + phosphate + H(+)</text>
        <dbReference type="Rhea" id="RHEA:13065"/>
        <dbReference type="ChEBI" id="CHEBI:15377"/>
        <dbReference type="ChEBI" id="CHEBI:15378"/>
        <dbReference type="ChEBI" id="CHEBI:30616"/>
        <dbReference type="ChEBI" id="CHEBI:43474"/>
        <dbReference type="ChEBI" id="CHEBI:456216"/>
    </reaction>
    <physiologicalReaction direction="left-to-right" evidence="1">
        <dbReference type="Rhea" id="RHEA:13066"/>
    </physiologicalReaction>
</comment>
<comment type="subunit">
    <text evidence="1">Interacts with PEX6; forming the PEX1-PEX6 AAA ATPase complex, which is composed of a heterohexamer formed by a trimer of PEX1-PEX6 dimers.</text>
</comment>
<comment type="subcellular location">
    <subcellularLocation>
        <location evidence="1">Cytoplasm</location>
        <location evidence="1">Cytosol</location>
    </subcellularLocation>
    <subcellularLocation>
        <location evidence="1">Peroxisome membrane</location>
        <topology evidence="1">Peripheral membrane protein</topology>
        <orientation evidence="1">Cytoplasmic side</orientation>
    </subcellularLocation>
</comment>
<comment type="disruption phenotype">
    <text evidence="4">Leads to growth defects with sparse aerial hyphae, and reduced number of nuclei in hyphal cells (PubMed:35323036). Also results in complete elimination of sporulation and trap formation and a remarkable decrease in the ability to trap nematodes (PubMed:35323036). Leads to defective cell wall biosynthesis and increased stress susceptibility (PubMed:35323036). Results in the up-regulation of the proteasome, membranes, ribosomes, DNA replication, and cell cycle functions, and the down-regulation of MAPK signaling and nitrogen metabolism (PubMed:35323036).</text>
</comment>
<comment type="similarity">
    <text evidence="6">Belongs to the AAA ATPase family.</text>
</comment>
<feature type="chain" id="PRO_0000456237" description="Peroxisomal ATPase PEX1">
    <location>
        <begin position="1"/>
        <end position="1194"/>
    </location>
</feature>
<feature type="region of interest" description="Disordered" evidence="3">
    <location>
        <begin position="220"/>
        <end position="255"/>
    </location>
</feature>
<feature type="region of interest" description="AAA-cassette D1" evidence="1">
    <location>
        <begin position="538"/>
        <end position="730"/>
    </location>
</feature>
<feature type="region of interest" description="AAA-cassette D2" evidence="1">
    <location>
        <begin position="844"/>
        <end position="1028"/>
    </location>
</feature>
<feature type="region of interest" description="Disordered" evidence="3">
    <location>
        <begin position="1062"/>
        <end position="1084"/>
    </location>
</feature>
<feature type="region of interest" description="Disordered" evidence="3">
    <location>
        <begin position="1116"/>
        <end position="1139"/>
    </location>
</feature>
<feature type="region of interest" description="Disordered" evidence="3">
    <location>
        <begin position="1174"/>
        <end position="1194"/>
    </location>
</feature>
<feature type="compositionally biased region" description="Basic residues" evidence="3">
    <location>
        <begin position="221"/>
        <end position="234"/>
    </location>
</feature>
<feature type="compositionally biased region" description="Polar residues" evidence="3">
    <location>
        <begin position="1066"/>
        <end position="1084"/>
    </location>
</feature>
<feature type="compositionally biased region" description="Low complexity" evidence="3">
    <location>
        <begin position="1116"/>
        <end position="1127"/>
    </location>
</feature>
<feature type="binding site" evidence="2">
    <location>
        <begin position="546"/>
        <end position="553"/>
    </location>
    <ligand>
        <name>ATP</name>
        <dbReference type="ChEBI" id="CHEBI:30616"/>
    </ligand>
</feature>
<feature type="binding site" evidence="2">
    <location>
        <begin position="849"/>
        <end position="856"/>
    </location>
    <ligand>
        <name>ATP</name>
        <dbReference type="ChEBI" id="CHEBI:30616"/>
    </ligand>
</feature>
<protein>
    <recommendedName>
        <fullName evidence="6">Peroxisomal ATPase PEX1</fullName>
        <ecNumber evidence="1">3.6.4.-</ecNumber>
    </recommendedName>
    <alternativeName>
        <fullName evidence="1">Peroxin-1</fullName>
    </alternativeName>
    <alternativeName>
        <fullName evidence="5">Peroxisomal biogenesis factor 1</fullName>
    </alternativeName>
</protein>